<gene>
    <name evidence="6" type="primary">phaC</name>
    <name evidence="7" type="synonym">phbC</name>
    <name type="ordered locus">H16_A1437</name>
</gene>
<sequence>MATGKGAAASTQEGKSQPFKVTPGPFDPATWLEWSRQWQGTEGNGHAAASGIPGLDALAGVKIAPAQLGDIQQRYMKDFSALWQAMAEGKAEATGPLHDRRFAGDAWRTNLPYRFAAAFYLLNARALTELADAVEADAKTRQRIRFAISQWVDAMSPANFLATNPEAQRLLIESGGESLRAGVRNMMEDLTRGKISQTDESAFEVGRNVAVTEGAVVFENEYFQLLQYKPLTDKVHARPLLMVPPCINKYYILDLQPESSLVRHVVEQGHTVFLVSWRNPDASMAGSTWDDYIEHAAIRAIEVARDISGQDKINVLGFCVGGTIVSTALAVLAARGEHPAASVTLLTTLLDFADTGILDVFVDEGHVQLREATLGGGAGAPCALLRGLELANTFSFLRPNDLVWNYVVDNYLKGNTPVPFDLLFWNGDATNLPGPWYCWYLRHTYLQNELKVPGKLTVCGVPVDLASIDVPTYIYGSREDHIVPWTAAYASTALLANKLRFVLGASGHIAGVINPPAKNKRSHWTNDALPESPQQWLAGAIEHHGSWWPDWTAWLAGQAGAKRAAPANYGNARYRAIEPAPGRYVKAKA</sequence>
<protein>
    <recommendedName>
        <fullName>Poly(3-hydroxyalkanoate) polymerase subunit PhaC</fullName>
        <shortName>PHA polymerase</shortName>
        <ecNumber>2.3.1.-</ecNumber>
    </recommendedName>
    <alternativeName>
        <fullName>PHB synthase subunit PhaC</fullName>
    </alternativeName>
    <alternativeName>
        <fullName>Poly(3-hydroxybutyrate) polymerase subunit PhaC</fullName>
        <shortName evidence="7">PHB polymerase</shortName>
        <shortName evidence="7">Poly-beta-hydroxybutyrate polymerase</shortName>
    </alternativeName>
    <alternativeName>
        <fullName>Polyhydroxyalkanoate synthase subunit PhaC</fullName>
        <shortName>PHA synthase</shortName>
    </alternativeName>
</protein>
<name>PHAC_CUPNH</name>
<proteinExistence type="evidence at protein level"/>
<dbReference type="EC" id="2.3.1.-"/>
<dbReference type="EMBL" id="J05003">
    <property type="protein sequence ID" value="AAA21975.1"/>
    <property type="molecule type" value="Genomic_DNA"/>
</dbReference>
<dbReference type="EMBL" id="AM260479">
    <property type="protein sequence ID" value="CAJ92572.1"/>
    <property type="molecule type" value="Genomic_DNA"/>
</dbReference>
<dbReference type="EMBL" id="M64341">
    <property type="protein sequence ID" value="AAA21979.1"/>
    <property type="molecule type" value="Genomic_DNA"/>
</dbReference>
<dbReference type="PIR" id="A34341">
    <property type="entry name" value="A34341"/>
</dbReference>
<dbReference type="RefSeq" id="WP_011615085.1">
    <property type="nucleotide sequence ID" value="NC_008313.1"/>
</dbReference>
<dbReference type="PDB" id="5HZ2">
    <property type="method" value="X-ray"/>
    <property type="resolution" value="1.80 A"/>
    <property type="chains" value="A=202-589"/>
</dbReference>
<dbReference type="PDB" id="5T6O">
    <property type="method" value="X-ray"/>
    <property type="resolution" value="1.80 A"/>
    <property type="chains" value="A=201-589"/>
</dbReference>
<dbReference type="PDBsum" id="5HZ2"/>
<dbReference type="PDBsum" id="5T6O"/>
<dbReference type="SMR" id="P23608"/>
<dbReference type="STRING" id="381666.H16_A1437"/>
<dbReference type="ESTHER" id="alceu-phbc">
    <property type="family name" value="PHA_synth_I"/>
</dbReference>
<dbReference type="KEGG" id="reh:H16_A1437"/>
<dbReference type="PATRIC" id="fig|381666.6.peg.1826"/>
<dbReference type="eggNOG" id="COG3243">
    <property type="taxonomic scope" value="Bacteria"/>
</dbReference>
<dbReference type="HOGENOM" id="CLU_017387_1_0_4"/>
<dbReference type="OrthoDB" id="7208816at2"/>
<dbReference type="BioCyc" id="MetaCyc:MONOMER-13090"/>
<dbReference type="BRENDA" id="2.3.1.304">
    <property type="organism ID" value="231"/>
</dbReference>
<dbReference type="UniPathway" id="UPA00917"/>
<dbReference type="Proteomes" id="UP000008210">
    <property type="component" value="Chromosome 1"/>
</dbReference>
<dbReference type="GO" id="GO:0005737">
    <property type="term" value="C:cytoplasm"/>
    <property type="evidence" value="ECO:0007669"/>
    <property type="project" value="UniProtKB-SubCell"/>
</dbReference>
<dbReference type="GO" id="GO:0016746">
    <property type="term" value="F:acyltransferase activity"/>
    <property type="evidence" value="ECO:0007669"/>
    <property type="project" value="UniProtKB-KW"/>
</dbReference>
<dbReference type="GO" id="GO:0042619">
    <property type="term" value="P:poly-hydroxybutyrate biosynthetic process"/>
    <property type="evidence" value="ECO:0007669"/>
    <property type="project" value="UniProtKB-KW"/>
</dbReference>
<dbReference type="Gene3D" id="3.40.50.1820">
    <property type="entry name" value="alpha/beta hydrolase"/>
    <property type="match status" value="1"/>
</dbReference>
<dbReference type="InterPro" id="IPR029058">
    <property type="entry name" value="AB_hydrolase_fold"/>
</dbReference>
<dbReference type="InterPro" id="IPR051321">
    <property type="entry name" value="PHA/PHB_synthase"/>
</dbReference>
<dbReference type="InterPro" id="IPR010963">
    <property type="entry name" value="PHA_synth_I"/>
</dbReference>
<dbReference type="InterPro" id="IPR010941">
    <property type="entry name" value="PhaC_N"/>
</dbReference>
<dbReference type="NCBIfam" id="TIGR01838">
    <property type="entry name" value="PHA_synth_I"/>
    <property type="match status" value="1"/>
</dbReference>
<dbReference type="PANTHER" id="PTHR36837">
    <property type="entry name" value="POLY(3-HYDROXYALKANOATE) POLYMERASE SUBUNIT PHAC"/>
    <property type="match status" value="1"/>
</dbReference>
<dbReference type="PANTHER" id="PTHR36837:SF5">
    <property type="entry name" value="POLY-3-HYDROXYBUTYRATE SYNTHASE"/>
    <property type="match status" value="1"/>
</dbReference>
<dbReference type="Pfam" id="PF07167">
    <property type="entry name" value="PhaC_N"/>
    <property type="match status" value="1"/>
</dbReference>
<dbReference type="SUPFAM" id="SSF53474">
    <property type="entry name" value="alpha/beta-Hydrolases"/>
    <property type="match status" value="1"/>
</dbReference>
<organism>
    <name type="scientific">Cupriavidus necator (strain ATCC 17699 / DSM 428 / KCTC 22496 / NCIMB 10442 / H16 / Stanier 337)</name>
    <name type="common">Ralstonia eutropha</name>
    <dbReference type="NCBI Taxonomy" id="381666"/>
    <lineage>
        <taxon>Bacteria</taxon>
        <taxon>Pseudomonadati</taxon>
        <taxon>Pseudomonadota</taxon>
        <taxon>Betaproteobacteria</taxon>
        <taxon>Burkholderiales</taxon>
        <taxon>Burkholderiaceae</taxon>
        <taxon>Cupriavidus</taxon>
    </lineage>
</organism>
<feature type="chain" id="PRO_0000215468" description="Poly(3-hydroxyalkanoate) polymerase subunit PhaC">
    <location>
        <begin position="1"/>
        <end position="589"/>
    </location>
</feature>
<feature type="region of interest" description="Disordered" evidence="3">
    <location>
        <begin position="1"/>
        <end position="23"/>
    </location>
</feature>
<feature type="active site" evidence="2">
    <location>
        <position position="319"/>
    </location>
</feature>
<feature type="turn" evidence="10">
    <location>
        <begin position="205"/>
        <end position="207"/>
    </location>
</feature>
<feature type="strand" evidence="10">
    <location>
        <begin position="208"/>
        <end position="210"/>
    </location>
</feature>
<feature type="strand" evidence="10">
    <location>
        <begin position="214"/>
        <end position="219"/>
    </location>
</feature>
<feature type="strand" evidence="10">
    <location>
        <begin position="221"/>
        <end position="228"/>
    </location>
</feature>
<feature type="strand" evidence="10">
    <location>
        <begin position="231"/>
        <end position="238"/>
    </location>
</feature>
<feature type="strand" evidence="10">
    <location>
        <begin position="240"/>
        <end position="243"/>
    </location>
</feature>
<feature type="strand" evidence="10">
    <location>
        <begin position="246"/>
        <end position="248"/>
    </location>
</feature>
<feature type="helix" evidence="10">
    <location>
        <begin position="250"/>
        <end position="254"/>
    </location>
</feature>
<feature type="helix" evidence="10">
    <location>
        <begin position="257"/>
        <end position="259"/>
    </location>
</feature>
<feature type="helix" evidence="10">
    <location>
        <begin position="261"/>
        <end position="267"/>
    </location>
</feature>
<feature type="strand" evidence="10">
    <location>
        <begin position="272"/>
        <end position="277"/>
    </location>
</feature>
<feature type="helix" evidence="10">
    <location>
        <begin position="282"/>
        <end position="284"/>
    </location>
</feature>
<feature type="helix" evidence="10">
    <location>
        <begin position="289"/>
        <end position="295"/>
    </location>
</feature>
<feature type="helix" evidence="10">
    <location>
        <begin position="297"/>
        <end position="308"/>
    </location>
</feature>
<feature type="strand" evidence="10">
    <location>
        <begin position="313"/>
        <end position="318"/>
    </location>
</feature>
<feature type="helix" evidence="10">
    <location>
        <begin position="320"/>
        <end position="334"/>
    </location>
</feature>
<feature type="strand" evidence="10">
    <location>
        <begin position="340"/>
        <end position="347"/>
    </location>
</feature>
<feature type="strand" evidence="10">
    <location>
        <begin position="356"/>
        <end position="358"/>
    </location>
</feature>
<feature type="helix" evidence="10">
    <location>
        <begin position="359"/>
        <end position="361"/>
    </location>
</feature>
<feature type="helix" evidence="10">
    <location>
        <begin position="382"/>
        <end position="384"/>
    </location>
</feature>
<feature type="strand" evidence="10">
    <location>
        <begin position="388"/>
        <end position="391"/>
    </location>
</feature>
<feature type="turn" evidence="10">
    <location>
        <begin position="394"/>
        <end position="397"/>
    </location>
</feature>
<feature type="helix" evidence="10">
    <location>
        <begin position="402"/>
        <end position="415"/>
    </location>
</feature>
<feature type="helix" evidence="10">
    <location>
        <begin position="420"/>
        <end position="427"/>
    </location>
</feature>
<feature type="strand" evidence="10">
    <location>
        <begin position="430"/>
        <end position="433"/>
    </location>
</feature>
<feature type="helix" evidence="10">
    <location>
        <begin position="434"/>
        <end position="443"/>
    </location>
</feature>
<feature type="turn" evidence="10">
    <location>
        <begin position="444"/>
        <end position="447"/>
    </location>
</feature>
<feature type="strand" evidence="11">
    <location>
        <begin position="456"/>
        <end position="458"/>
    </location>
</feature>
<feature type="helix" evidence="10">
    <location>
        <begin position="465"/>
        <end position="467"/>
    </location>
</feature>
<feature type="strand" evidence="10">
    <location>
        <begin position="472"/>
        <end position="477"/>
    </location>
</feature>
<feature type="strand" evidence="10">
    <location>
        <begin position="481"/>
        <end position="483"/>
    </location>
</feature>
<feature type="helix" evidence="10">
    <location>
        <begin position="485"/>
        <end position="489"/>
    </location>
</feature>
<feature type="helix" evidence="10">
    <location>
        <begin position="490"/>
        <end position="493"/>
    </location>
</feature>
<feature type="strand" evidence="10">
    <location>
        <begin position="499"/>
        <end position="506"/>
    </location>
</feature>
<feature type="turn" evidence="10">
    <location>
        <begin position="508"/>
        <end position="512"/>
    </location>
</feature>
<feature type="helix" evidence="10">
    <location>
        <begin position="516"/>
        <end position="518"/>
    </location>
</feature>
<feature type="strand" evidence="10">
    <location>
        <begin position="522"/>
        <end position="525"/>
    </location>
</feature>
<feature type="helix" evidence="10">
    <location>
        <begin position="533"/>
        <end position="538"/>
    </location>
</feature>
<feature type="strand" evidence="10">
    <location>
        <begin position="541"/>
        <end position="545"/>
    </location>
</feature>
<feature type="helix" evidence="10">
    <location>
        <begin position="548"/>
        <end position="558"/>
    </location>
</feature>
<feature type="strand" evidence="10">
    <location>
        <begin position="562"/>
        <end position="564"/>
    </location>
</feature>
<feature type="strand" evidence="10">
    <location>
        <begin position="567"/>
        <end position="570"/>
    </location>
</feature>
<feature type="strand" evidence="10">
    <location>
        <begin position="572"/>
        <end position="574"/>
    </location>
</feature>
<feature type="helix" evidence="10">
    <location>
        <begin position="584"/>
        <end position="586"/>
    </location>
</feature>
<comment type="function">
    <text evidence="5">Polymerizes (R)-3-hydroxybutyryl-CoA to create polyhydroxybutyrate (PHB) which consists of thousands of hydroxybutyrate molecules linked end to end. PHB serves as an intracellular energy reserve material when cells grow under conditions of nutrient limitation.</text>
</comment>
<comment type="catalytic activity">
    <reaction evidence="1">
        <text>(3R)-3-hydroxybutanoyl-CoA + [(3R)-hydroxybutanoate](n) = [(3R)-hydroxybutanoate](n+1) + CoA</text>
        <dbReference type="Rhea" id="RHEA:15405"/>
        <dbReference type="Rhea" id="RHEA-COMP:14464"/>
        <dbReference type="Rhea" id="RHEA-COMP:14465"/>
        <dbReference type="ChEBI" id="CHEBI:8298"/>
        <dbReference type="ChEBI" id="CHEBI:57287"/>
        <dbReference type="ChEBI" id="CHEBI:57315"/>
    </reaction>
</comment>
<comment type="pathway">
    <text evidence="5">Biopolymer metabolism; poly-(R)-3-hydroxybutanoate biosynthesis.</text>
</comment>
<comment type="subunit">
    <text evidence="9">Monomer.</text>
</comment>
<comment type="subcellular location">
    <subcellularLocation>
        <location>Cytoplasm</location>
    </subcellularLocation>
</comment>
<comment type="biotechnology">
    <text evidence="4">Forms a biodegradable plastic that is degraded naturally and completely by bacteria into carbon dioxide and water. Utilized in the medical industry. Plates made from PHA-based plastics can be left in place to help heal fractured bones. After the bone has healed, the plastic slowly breaks down in the body. Utilized by Imperial Chemical Industries (ICI) to produce a PHB-PHV (poly-B-valerate) copolymer sold under the trade name 'Biopol'. Biopol is used as packaging material. The PHB-PHV copolymer consists of approximately 20% PHV and 80% PHB. It can be synthesized by incorporating glucose and valeric acid into the medium. PHB-PHV is stronger and more flexible than regular PHB. Under industrial conditions, 80% or higher of the cell dry weight of A.eutrophus usually consists of the PHB-PHV copolymer.</text>
</comment>
<comment type="similarity">
    <text evidence="8">Belongs to the PHA/PHB synthase family. Type I PhaC subfamily.</text>
</comment>
<reference key="1">
    <citation type="journal article" date="1989" name="J. Biol. Chem.">
        <title>Poly-beta-hydroxybutyrate (PHB) biosynthesis in Alcaligenes eutrophus H16. Identification and characterization of the PHB polymerase gene (phbC).</title>
        <authorList>
            <person name="Peoples O.P."/>
            <person name="Sinskey A.J."/>
        </authorList>
    </citation>
    <scope>NUCLEOTIDE SEQUENCE [GENOMIC DNA]</scope>
    <scope>IDENTIFICATION</scope>
    <scope>FUNCTION IN PHB SYNTHESIS</scope>
    <scope>SUBUNIT</scope>
    <scope>PATHWAY</scope>
    <source>
        <strain>ATCC 17699 / DSM 428 / KCTC 22496 / NCIMB 10442 / H16 / Stanier 337</strain>
    </source>
</reference>
<reference key="2">
    <citation type="journal article" date="2006" name="Nat. Biotechnol.">
        <title>Genome sequence of the bioplastic-producing 'Knallgas' bacterium Ralstonia eutropha H16.</title>
        <authorList>
            <person name="Pohlmann A."/>
            <person name="Fricke W.F."/>
            <person name="Reinecke F."/>
            <person name="Kusian B."/>
            <person name="Liesegang H."/>
            <person name="Cramm R."/>
            <person name="Eitinger T."/>
            <person name="Ewering C."/>
            <person name="Poetter M."/>
            <person name="Schwartz E."/>
            <person name="Strittmatter A."/>
            <person name="Voss I."/>
            <person name="Gottschalk G."/>
            <person name="Steinbuechel A."/>
            <person name="Friedrich B."/>
            <person name="Bowien B."/>
        </authorList>
    </citation>
    <scope>NUCLEOTIDE SEQUENCE [LARGE SCALE GENOMIC DNA]</scope>
    <scope>BIOTECHNOLOGY</scope>
    <source>
        <strain>ATCC 17699 / DSM 428 / KCTC 22496 / NCIMB 10442 / H16 / Stanier 337</strain>
    </source>
</reference>
<reference key="3">
    <citation type="journal article" date="1991" name="J. Bacteriol.">
        <title>Molecular analysis of the Alcaligenes eutrophus poly(3-hydroxybutyrate) biosynthetic operon: identification of the N-terminus of poly(3-hydroxybutyrate) synthase and identification of the promoter.</title>
        <authorList>
            <person name="Schubert P."/>
            <person name="Krueger N."/>
            <person name="Steinbuechel A."/>
        </authorList>
    </citation>
    <scope>NUCLEOTIDE SEQUENCE [GENOMIC DNA] OF 1-219</scope>
</reference>
<reference key="4">
    <citation type="journal article" date="1992" name="FEMS Microbiol. Rev.">
        <title>Molecular basis for biosynthesis and accumulation of polyhydroxyalkanoic acids in bacteria.</title>
        <authorList>
            <person name="Steinbuechel A."/>
            <person name="Hustede E."/>
            <person name="Liebergesell M."/>
            <person name="Pieper U."/>
            <person name="Timm A."/>
            <person name="Valentin H."/>
        </authorList>
    </citation>
    <scope>GENE NAME</scope>
</reference>
<keyword id="KW-0002">3D-structure</keyword>
<keyword id="KW-0012">Acyltransferase</keyword>
<keyword id="KW-0963">Cytoplasm</keyword>
<keyword id="KW-0583">PHB biosynthesis</keyword>
<keyword id="KW-1185">Reference proteome</keyword>
<keyword id="KW-0808">Transferase</keyword>
<accession>P23608</accession>
<accession>Q0KBP9</accession>
<evidence type="ECO:0000250" key="1">
    <source>
        <dbReference type="UniProtKB" id="P45370"/>
    </source>
</evidence>
<evidence type="ECO:0000255" key="2"/>
<evidence type="ECO:0000256" key="3">
    <source>
        <dbReference type="SAM" id="MobiDB-lite"/>
    </source>
</evidence>
<evidence type="ECO:0000269" key="4">
    <source>
    </source>
</evidence>
<evidence type="ECO:0000269" key="5">
    <source>
    </source>
</evidence>
<evidence type="ECO:0000303" key="6">
    <source>
    </source>
</evidence>
<evidence type="ECO:0000303" key="7">
    <source>
    </source>
</evidence>
<evidence type="ECO:0000305" key="8"/>
<evidence type="ECO:0000305" key="9">
    <source>
    </source>
</evidence>
<evidence type="ECO:0007829" key="10">
    <source>
        <dbReference type="PDB" id="5HZ2"/>
    </source>
</evidence>
<evidence type="ECO:0007829" key="11">
    <source>
        <dbReference type="PDB" id="5T6O"/>
    </source>
</evidence>